<dbReference type="EMBL" id="AF050672">
    <property type="protein sequence ID" value="AAD09956.1"/>
    <property type="molecule type" value="Genomic_DNA"/>
</dbReference>
<dbReference type="EMBL" id="U80854">
    <property type="protein sequence ID" value="AAD09226.1"/>
    <property type="molecule type" value="Genomic_DNA"/>
</dbReference>
<dbReference type="EMBL" id="AL033497">
    <property type="protein sequence ID" value="CAA21966.1"/>
    <property type="molecule type" value="Genomic_DNA"/>
</dbReference>
<dbReference type="EMBL" id="CP017623">
    <property type="protein sequence ID" value="AOW25983.1"/>
    <property type="molecule type" value="Genomic_DNA"/>
</dbReference>
<dbReference type="PIR" id="T52146">
    <property type="entry name" value="T52146"/>
</dbReference>
<dbReference type="RefSeq" id="XP_721492.1">
    <property type="nucleotide sequence ID" value="XM_716399.1"/>
</dbReference>
<dbReference type="PDB" id="7PZY">
    <property type="method" value="EM"/>
    <property type="resolution" value="2.32 A"/>
    <property type="chains" value="t=1-202"/>
</dbReference>
<dbReference type="PDB" id="7Q08">
    <property type="method" value="EM"/>
    <property type="resolution" value="2.56 A"/>
    <property type="chains" value="t=1-202"/>
</dbReference>
<dbReference type="PDB" id="7Q0F">
    <property type="method" value="EM"/>
    <property type="resolution" value="2.64 A"/>
    <property type="chains" value="t=1-202"/>
</dbReference>
<dbReference type="PDB" id="7Q0P">
    <property type="method" value="EM"/>
    <property type="resolution" value="2.77 A"/>
    <property type="chains" value="t=1-202"/>
</dbReference>
<dbReference type="PDB" id="7Q0R">
    <property type="method" value="EM"/>
    <property type="resolution" value="2.67 A"/>
    <property type="chains" value="t=1-202"/>
</dbReference>
<dbReference type="PDB" id="8C3A">
    <property type="method" value="X-ray"/>
    <property type="resolution" value="3.00 A"/>
    <property type="chains" value="BG/t=1-202"/>
</dbReference>
<dbReference type="PDB" id="8OGJ">
    <property type="method" value="EM"/>
    <property type="resolution" value="3.10 A"/>
    <property type="chains" value="t=1-202"/>
</dbReference>
<dbReference type="PDB" id="8OH6">
    <property type="method" value="X-ray"/>
    <property type="resolution" value="3.35 A"/>
    <property type="chains" value="BG/t=1-202"/>
</dbReference>
<dbReference type="PDB" id="8OI5">
    <property type="method" value="X-ray"/>
    <property type="resolution" value="2.90 A"/>
    <property type="chains" value="BG/t=1-202"/>
</dbReference>
<dbReference type="PDB" id="8OJ3">
    <property type="method" value="X-ray"/>
    <property type="resolution" value="3.50 A"/>
    <property type="chains" value="BG/t=1-202"/>
</dbReference>
<dbReference type="PDBsum" id="7PZY"/>
<dbReference type="PDBsum" id="7Q08"/>
<dbReference type="PDBsum" id="7Q0F"/>
<dbReference type="PDBsum" id="7Q0P"/>
<dbReference type="PDBsum" id="7Q0R"/>
<dbReference type="PDBsum" id="8C3A"/>
<dbReference type="PDBsum" id="8OGJ"/>
<dbReference type="PDBsum" id="8OH6"/>
<dbReference type="PDBsum" id="8OI5"/>
<dbReference type="PDBsum" id="8OJ3"/>
<dbReference type="EMDB" id="EMD-13737"/>
<dbReference type="EMDB" id="EMD-13741"/>
<dbReference type="EMDB" id="EMD-13744"/>
<dbReference type="EMDB" id="EMD-13749"/>
<dbReference type="EMDB" id="EMD-13750"/>
<dbReference type="SMR" id="O59931"/>
<dbReference type="BioGRID" id="1219935">
    <property type="interactions" value="2"/>
</dbReference>
<dbReference type="FunCoup" id="O59931">
    <property type="interactions" value="1120"/>
</dbReference>
<dbReference type="STRING" id="237561.O59931"/>
<dbReference type="EnsemblFungi" id="C1_03020C_A-T">
    <property type="protein sequence ID" value="C1_03020C_A-T-p1"/>
    <property type="gene ID" value="C1_03020C_A"/>
</dbReference>
<dbReference type="GeneID" id="3636841"/>
<dbReference type="KEGG" id="cal:CAALFM_C103020CA"/>
<dbReference type="CGD" id="CAL0000201310">
    <property type="gene designation" value="RPL13"/>
</dbReference>
<dbReference type="VEuPathDB" id="FungiDB:C1_03020C_A"/>
<dbReference type="eggNOG" id="KOG3295">
    <property type="taxonomic scope" value="Eukaryota"/>
</dbReference>
<dbReference type="HOGENOM" id="CLU_075696_1_0_1"/>
<dbReference type="InParanoid" id="O59931"/>
<dbReference type="OMA" id="IQKNHFR"/>
<dbReference type="OrthoDB" id="10264538at2759"/>
<dbReference type="PRO" id="PR:O59931"/>
<dbReference type="Proteomes" id="UP000000559">
    <property type="component" value="Chromosome 1"/>
</dbReference>
<dbReference type="GO" id="GO:0009986">
    <property type="term" value="C:cell surface"/>
    <property type="evidence" value="ECO:0000314"/>
    <property type="project" value="CGD"/>
</dbReference>
<dbReference type="GO" id="GO:0022625">
    <property type="term" value="C:cytosolic large ribosomal subunit"/>
    <property type="evidence" value="ECO:0000318"/>
    <property type="project" value="GO_Central"/>
</dbReference>
<dbReference type="GO" id="GO:0030684">
    <property type="term" value="C:preribosome"/>
    <property type="evidence" value="ECO:0007669"/>
    <property type="project" value="EnsemblFungi"/>
</dbReference>
<dbReference type="GO" id="GO:0003723">
    <property type="term" value="F:RNA binding"/>
    <property type="evidence" value="ECO:0000318"/>
    <property type="project" value="GO_Central"/>
</dbReference>
<dbReference type="GO" id="GO:0003735">
    <property type="term" value="F:structural constituent of ribosome"/>
    <property type="evidence" value="ECO:0000318"/>
    <property type="project" value="GO_Central"/>
</dbReference>
<dbReference type="GO" id="GO:0006412">
    <property type="term" value="P:translation"/>
    <property type="evidence" value="ECO:0007669"/>
    <property type="project" value="InterPro"/>
</dbReference>
<dbReference type="FunFam" id="1.20.5.110:FF:000003">
    <property type="entry name" value="60S ribosomal protein L13"/>
    <property type="match status" value="1"/>
</dbReference>
<dbReference type="Gene3D" id="1.20.5.110">
    <property type="match status" value="1"/>
</dbReference>
<dbReference type="HAMAP" id="MF_00499">
    <property type="entry name" value="Ribosomal_eL13"/>
    <property type="match status" value="1"/>
</dbReference>
<dbReference type="InterPro" id="IPR001380">
    <property type="entry name" value="Ribosomal_eL13"/>
</dbReference>
<dbReference type="InterPro" id="IPR018256">
    <property type="entry name" value="Ribosomal_eL13_CS"/>
</dbReference>
<dbReference type="PANTHER" id="PTHR11722">
    <property type="entry name" value="60S RIBOSOMAL PROTEIN L13"/>
    <property type="match status" value="1"/>
</dbReference>
<dbReference type="PANTHER" id="PTHR11722:SF0">
    <property type="entry name" value="LARGE RIBOSOMAL SUBUNIT PROTEIN EL13"/>
    <property type="match status" value="1"/>
</dbReference>
<dbReference type="Pfam" id="PF01294">
    <property type="entry name" value="Ribosomal_L13e"/>
    <property type="match status" value="1"/>
</dbReference>
<dbReference type="PROSITE" id="PS01104">
    <property type="entry name" value="RIBOSOMAL_L13E"/>
    <property type="match status" value="1"/>
</dbReference>
<keyword id="KW-0002">3D-structure</keyword>
<keyword id="KW-0963">Cytoplasm</keyword>
<keyword id="KW-1185">Reference proteome</keyword>
<keyword id="KW-0687">Ribonucleoprotein</keyword>
<keyword id="KW-0689">Ribosomal protein</keyword>
<feature type="chain" id="PRO_0000192935" description="Large ribosomal subunit protein eL13">
    <location>
        <begin position="1"/>
        <end position="202"/>
    </location>
</feature>
<feature type="region of interest" description="Disordered" evidence="1">
    <location>
        <begin position="183"/>
        <end position="202"/>
    </location>
</feature>
<name>RL13_CANAL</name>
<gene>
    <name evidence="3" type="primary">RPL13</name>
    <name type="ordered locus">CAALFM_C103020CA</name>
    <name type="ORF">Ca49C10.02</name>
    <name type="ORF">CaO19.10511</name>
    <name type="ORF">CaO19.2994</name>
</gene>
<protein>
    <recommendedName>
        <fullName evidence="3">Large ribosomal subunit protein eL13</fullName>
    </recommendedName>
    <alternativeName>
        <fullName>60S ribosomal protein L13</fullName>
    </alternativeName>
</protein>
<accession>O59931</accession>
<accession>A0A1D8PCX1</accession>
<accession>Q5AI59</accession>
<sequence>MAISKNLPLLNNHFRKHWQERVRVHFDQAGKKASRRQSRLRKAAKIAPRPIDALRPVVRAPTVKYNRKVRAGRGFTLAELKAVGIAPKYARTIGISVDHRRQNKSQETFDANVARLQEYKSKLVIFDKKTKASEVASFEQVDVSATFPVEQPAPESGLRAVEVPEQTAYRTLRLARNEKKYKGIREKRAKEKAEAEAEKAKK</sequence>
<comment type="function">
    <text evidence="5">Component of the ribosome, a large ribonucleoprotein complex responsible for the synthesis of proteins in the cell. The small ribosomal subunit (SSU) binds messenger RNAs (mRNAs) and translates the encoded message by selecting cognate aminoacyl-transfer RNA (tRNA) molecules. The large subunit (LSU) contains the ribosomal catalytic site termed the peptidyl transferase center (PTC), which catalyzes the formation of peptide bonds, thereby polymerizing the amino acids delivered by tRNAs into a polypeptide chain. The nascent polypeptides leave the ribosome through a tunnel in the LSU and interact with protein factors that function in enzymatic processing, targeting, and the membrane insertion of nascent chains at the exit of the ribosomal tunnel.</text>
</comment>
<comment type="subunit">
    <text evidence="2">Component of the large ribosomal subunit (PubMed:35613268). Mature ribosomes consist of a small (40S) and a large (60S) subunit (PubMed:35613268). The 40S subunit contains about 32 different proteins and 1 molecule of RNA (18S) (PubMed:35613268). The 60S subunit contains 45 different proteins and 3 molecules of RNA (25S, 5.8S and 5S) (PubMed:35613268).</text>
</comment>
<comment type="subcellular location">
    <subcellularLocation>
        <location evidence="5">Cytoplasm</location>
    </subcellularLocation>
</comment>
<comment type="similarity">
    <text evidence="4">Belongs to the eukaryotic ribosomal protein eL13 family.</text>
</comment>
<reference key="1">
    <citation type="submission" date="1998-02" db="EMBL/GenBank/DDBJ databases">
        <title>Sequence of the Candida albicans cDNA encoding ribosomal protein L13.</title>
        <authorList>
            <person name="Wang X."/>
            <person name="Andrews H.L."/>
            <person name="Polta J.M."/>
            <person name="Sundstrom P."/>
        </authorList>
    </citation>
    <scope>NUCLEOTIDE SEQUENCE [GENOMIC DNA]</scope>
    <source>
        <strain>SC5314 / ATCC MYA-2876</strain>
    </source>
</reference>
<reference key="2">
    <citation type="submission" date="1998-11" db="EMBL/GenBank/DDBJ databases">
        <title>Candida albicans strain 1161 genome pilot sequencing project.</title>
        <authorList>
            <person name="Taylor K."/>
            <person name="Harris D."/>
            <person name="Barrell B.G."/>
            <person name="Rajandream M.A."/>
        </authorList>
    </citation>
    <scope>NUCLEOTIDE SEQUENCE [LARGE SCALE GENOMIC DNA]</scope>
    <source>
        <strain>1161</strain>
    </source>
</reference>
<reference key="3">
    <citation type="journal article" date="2004" name="Proc. Natl. Acad. Sci. U.S.A.">
        <title>The diploid genome sequence of Candida albicans.</title>
        <authorList>
            <person name="Jones T."/>
            <person name="Federspiel N.A."/>
            <person name="Chibana H."/>
            <person name="Dungan J."/>
            <person name="Kalman S."/>
            <person name="Magee B.B."/>
            <person name="Newport G."/>
            <person name="Thorstenson Y.R."/>
            <person name="Agabian N."/>
            <person name="Magee P.T."/>
            <person name="Davis R.W."/>
            <person name="Scherer S."/>
        </authorList>
    </citation>
    <scope>NUCLEOTIDE SEQUENCE [LARGE SCALE GENOMIC DNA]</scope>
    <source>
        <strain>SC5314 / ATCC MYA-2876</strain>
    </source>
</reference>
<reference key="4">
    <citation type="journal article" date="2007" name="Genome Biol.">
        <title>Assembly of the Candida albicans genome into sixteen supercontigs aligned on the eight chromosomes.</title>
        <authorList>
            <person name="van het Hoog M."/>
            <person name="Rast T.J."/>
            <person name="Martchenko M."/>
            <person name="Grindle S."/>
            <person name="Dignard D."/>
            <person name="Hogues H."/>
            <person name="Cuomo C."/>
            <person name="Berriman M."/>
            <person name="Scherer S."/>
            <person name="Magee B.B."/>
            <person name="Whiteway M."/>
            <person name="Chibana H."/>
            <person name="Nantel A."/>
            <person name="Magee P.T."/>
        </authorList>
    </citation>
    <scope>GENOME REANNOTATION</scope>
    <source>
        <strain>SC5314 / ATCC MYA-2876</strain>
    </source>
</reference>
<reference key="5">
    <citation type="journal article" date="2013" name="Genome Biol.">
        <title>Assembly of a phased diploid Candida albicans genome facilitates allele-specific measurements and provides a simple model for repeat and indel structure.</title>
        <authorList>
            <person name="Muzzey D."/>
            <person name="Schwartz K."/>
            <person name="Weissman J.S."/>
            <person name="Sherlock G."/>
        </authorList>
    </citation>
    <scope>NUCLEOTIDE SEQUENCE [LARGE SCALE GENOMIC DNA]</scope>
    <scope>GENOME REANNOTATION</scope>
    <source>
        <strain>SC5314 / ATCC MYA-2876</strain>
    </source>
</reference>
<reference evidence="6 7 8" key="6">
    <citation type="journal article" date="2022" name="Sci. Adv.">
        <title>E-site drug specificity of the human pathogen Candida albicans ribosome.</title>
        <authorList>
            <person name="Zgadzay Y."/>
            <person name="Kolosova O."/>
            <person name="Stetsenko A."/>
            <person name="Wu C."/>
            <person name="Bruchlen D."/>
            <person name="Usachev K."/>
            <person name="Validov S."/>
            <person name="Jenner L."/>
            <person name="Rogachev A."/>
            <person name="Yusupova G."/>
            <person name="Sachs M.S."/>
            <person name="Guskov A."/>
            <person name="Yusupov M."/>
        </authorList>
    </citation>
    <scope>STRUCTURE BY ELECTRON MICROSCOPY (2.32 ANGSTROMS) OF THE 80S RIBOSOME</scope>
    <scope>SUBUNIT</scope>
</reference>
<proteinExistence type="evidence at protein level"/>
<evidence type="ECO:0000256" key="1">
    <source>
        <dbReference type="SAM" id="MobiDB-lite"/>
    </source>
</evidence>
<evidence type="ECO:0000269" key="2">
    <source>
    </source>
</evidence>
<evidence type="ECO:0000303" key="3">
    <source>
    </source>
</evidence>
<evidence type="ECO:0000305" key="4"/>
<evidence type="ECO:0000305" key="5">
    <source>
    </source>
</evidence>
<evidence type="ECO:0007744" key="6">
    <source>
        <dbReference type="PDB" id="7PZY"/>
    </source>
</evidence>
<evidence type="ECO:0007744" key="7">
    <source>
        <dbReference type="PDB" id="7Q0F"/>
    </source>
</evidence>
<evidence type="ECO:0007744" key="8">
    <source>
        <dbReference type="PDB" id="7Q0P"/>
    </source>
</evidence>
<organism>
    <name type="scientific">Candida albicans (strain SC5314 / ATCC MYA-2876)</name>
    <name type="common">Yeast</name>
    <dbReference type="NCBI Taxonomy" id="237561"/>
    <lineage>
        <taxon>Eukaryota</taxon>
        <taxon>Fungi</taxon>
        <taxon>Dikarya</taxon>
        <taxon>Ascomycota</taxon>
        <taxon>Saccharomycotina</taxon>
        <taxon>Pichiomycetes</taxon>
        <taxon>Debaryomycetaceae</taxon>
        <taxon>Candida/Lodderomyces clade</taxon>
        <taxon>Candida</taxon>
    </lineage>
</organism>